<gene>
    <name type="primary">sta3</name>
    <name type="synonym">sta4</name>
</gene>
<name>HST3_ECOLX</name>
<reference key="1">
    <citation type="journal article" date="1988" name="Plasmid">
        <title>Cloning, sequencing, and expression in Ficoll-generated minicells of an Escherichia coli heat-stable enterotoxin gene.</title>
        <authorList>
            <person name="Stieglitz H."/>
            <person name="Cervantes L."/>
            <person name="Robledo R."/>
            <person name="Fonseca R."/>
            <person name="Covarrubias L."/>
            <person name="Bolivar F."/>
            <person name="Kupersztoch Y.M."/>
        </authorList>
    </citation>
    <scope>NUCLEOTIDE SEQUENCE [GENOMIC DNA]</scope>
</reference>
<reference key="2">
    <citation type="journal article" date="1983" name="Infect. Immun.">
        <title>Isolation and nucleotide sequence determination of a gene encoding a heat-stable enterotoxin of Escherichia coli.</title>
        <authorList>
            <person name="Moseley S.L."/>
            <person name="Hardy J.W."/>
            <person name="Huq M.I."/>
            <person name="Echeverria P."/>
            <person name="Falkow S."/>
        </authorList>
    </citation>
    <scope>NUCLEOTIDE SEQUENCE [GENOMIC DNA]</scope>
    <source>
        <strain>153837-2</strain>
    </source>
</reference>
<reference key="3">
    <citation type="journal article" date="1990" name="Toxicon">
        <title>Isolation and nucleotide sequence determination of a gene encoding a heat-stable enterotoxin of Escherichia coli.</title>
        <authorList>
            <person name="Zhou X."/>
            <person name="Shen L.P."/>
            <person name="Chi C.W."/>
        </authorList>
    </citation>
    <scope>NUCLEOTIDE SEQUENCE [GENOMIC DNA]</scope>
</reference>
<reference key="4">
    <citation type="journal article" date="1989" name="Infect. Immun.">
        <title>Rectification of two Escherichia coli heat-stable enterotoxin allele sequences and lack of biological effect of changing the carboxy-terminal tyrosine to histidine.</title>
        <authorList>
            <person name="Guzman-Verduzio L.M."/>
            <person name="Kupersztoch Y.M."/>
        </authorList>
    </citation>
    <scope>NUCLEOTIDE SEQUENCE [GENOMIC DNA]</scope>
</reference>
<reference key="5">
    <citation type="journal article" date="1989" name="Gene">
        <title>Cloning and hyperexpression of a gene encoding the heat-stable toxin of Escherichia coli.</title>
        <authorList>
            <person name="Dwarakanath P."/>
            <person name="Visweswariah S.S."/>
            <person name="Subrahmanyam Y.V.B.K."/>
            <person name="Shanthi G."/>
            <person name="Jagannatha H.M."/>
            <person name="Balganesh T.S."/>
        </authorList>
    </citation>
    <scope>NUCLEOTIDE SEQUENCE [GENOMIC DNA]</scope>
</reference>
<reference key="6">
    <citation type="journal article" date="1982" name="Eur. J. Biochem.">
        <title>Amino-acid sequence of a heat-stable enterotoxin produced by human enterotoxigenic Escherichia coli.</title>
        <authorList>
            <person name="Aimoto S."/>
            <person name="Takao T."/>
            <person name="Shimonishi Y."/>
            <person name="Hara S."/>
            <person name="Takeda T."/>
            <person name="Takeda Y."/>
            <person name="Miwatani T."/>
        </authorList>
    </citation>
    <scope>PROTEIN SEQUENCE OF 54-72</scope>
</reference>
<reference key="7">
    <citation type="journal article" date="1987" name="FEBS Lett.">
        <title>Mode of disulfide bond formation of a heat-stable enterotoxin (STh) produced by a human strain of enterotoxigenic Escherichia coli.</title>
        <authorList>
            <person name="Shimonishi Y."/>
            <person name="Hidaka Y."/>
            <person name="Koizumi M."/>
            <person name="Hane M."/>
            <person name="Aimoto S."/>
            <person name="Takeda T."/>
            <person name="Miwatani T."/>
            <person name="Takeda Y."/>
        </authorList>
    </citation>
    <scope>DISULFIDE BONDS</scope>
</reference>
<reference key="8">
    <citation type="journal article" date="1990" name="Mol. Microbiol.">
        <title>Two precursors of the heat-stable enterotoxin of Escherichia coli: evidence of extracellular processing.</title>
        <authorList>
            <person name="Rasheed J.K."/>
            <person name="Guzman-Verduzco L.M."/>
            <person name="Kupersztoch Y.M."/>
        </authorList>
    </citation>
    <scope>PROTEOLYTIC PROCESSING</scope>
</reference>
<accession>P07965</accession>
<accession>P26588</accession>
<comment type="function">
    <text>Toxin which activates the particulate form of guanylate cyclase and increases cyclic GMP levels within the host intestinal epithelial cells.</text>
</comment>
<comment type="subcellular location">
    <subcellularLocation>
        <location>Secreted</location>
    </subcellularLocation>
</comment>
<comment type="pharmaceutical">
    <text>Linaclotide, sold as Linzess (Abbvie) in N. America and Constella (Astellas) elsewhere, is a derivative of this protein corresponding to residues 59 to 72 with Tyr-62. It is used to treat irritable bowel syndrome.</text>
</comment>
<comment type="similarity">
    <text evidence="3">Belongs to the heat-stable enterotoxin family.</text>
</comment>
<proteinExistence type="evidence at protein level"/>
<keyword id="KW-0002">3D-structure</keyword>
<keyword id="KW-0903">Direct protein sequencing</keyword>
<keyword id="KW-1015">Disulfide bond</keyword>
<keyword id="KW-0260">Enterotoxin</keyword>
<keyword id="KW-0582">Pharmaceutical</keyword>
<keyword id="KW-0964">Secreted</keyword>
<keyword id="KW-0732">Signal</keyword>
<keyword id="KW-0800">Toxin</keyword>
<keyword id="KW-0843">Virulence</keyword>
<organism>
    <name type="scientific">Escherichia coli</name>
    <dbReference type="NCBI Taxonomy" id="562"/>
    <lineage>
        <taxon>Bacteria</taxon>
        <taxon>Pseudomonadati</taxon>
        <taxon>Pseudomonadota</taxon>
        <taxon>Gammaproteobacteria</taxon>
        <taxon>Enterobacterales</taxon>
        <taxon>Enterobacteriaceae</taxon>
        <taxon>Escherichia</taxon>
    </lineage>
</organism>
<sequence>MKKSILFIFLSVLSFSPFAQDAKPVESSKEKITLESKKCNIAKKSNKSGPESMNSSNYCCELCCNPACTGCY</sequence>
<evidence type="ECO:0000269" key="1">
    <source>
    </source>
</evidence>
<evidence type="ECO:0000269" key="2">
    <source>
    </source>
</evidence>
<evidence type="ECO:0000305" key="3"/>
<evidence type="ECO:0007829" key="4">
    <source>
        <dbReference type="PDB" id="7D37"/>
    </source>
</evidence>
<feature type="signal peptide">
    <location>
        <begin position="1"/>
        <end position="19"/>
    </location>
</feature>
<feature type="propeptide" id="PRO_0000035130" evidence="2">
    <location>
        <begin position="20"/>
        <end position="53"/>
    </location>
</feature>
<feature type="peptide" id="PRO_0000035131" description="Heat-stable enterotoxin A3/A4">
    <location>
        <begin position="54"/>
        <end position="72"/>
    </location>
</feature>
<feature type="disulfide bond" evidence="1">
    <location>
        <begin position="59"/>
        <end position="64"/>
    </location>
</feature>
<feature type="disulfide bond" evidence="1">
    <location>
        <begin position="60"/>
        <end position="68"/>
    </location>
</feature>
<feature type="disulfide bond" evidence="1">
    <location>
        <begin position="63"/>
        <end position="71"/>
    </location>
</feature>
<feature type="sequence conflict" description="In Ref. 2; AAA23990." evidence="3" ref="2">
    <original>A</original>
    <variation>P</variation>
    <location>
        <position position="19"/>
    </location>
</feature>
<feature type="strand" evidence="4">
    <location>
        <begin position="61"/>
        <end position="63"/>
    </location>
</feature>
<protein>
    <recommendedName>
        <fullName>Heat-stable enterotoxin A3/A4</fullName>
    </recommendedName>
    <alternativeName>
        <fullName>ST-H</fullName>
    </alternativeName>
    <alternativeName>
        <fullName>ST-IB</fullName>
    </alternativeName>
    <alternativeName>
        <fullName>STA3/STA4</fullName>
    </alternativeName>
    <innName>Linaclotide</innName>
</protein>
<dbReference type="EMBL" id="J03311">
    <property type="protein sequence ID" value="AAA24652.1"/>
    <property type="molecule type" value="Genomic_DNA"/>
</dbReference>
<dbReference type="EMBL" id="M34916">
    <property type="protein sequence ID" value="AAA23990.1"/>
    <property type="molecule type" value="Genomic_DNA"/>
</dbReference>
<dbReference type="EMBL" id="M18346">
    <property type="protein sequence ID" value="AAA23730.1"/>
    <property type="molecule type" value="Genomic_DNA"/>
</dbReference>
<dbReference type="EMBL" id="M29255">
    <property type="protein sequence ID" value="AAA24686.1"/>
    <property type="molecule type" value="Genomic_DNA"/>
</dbReference>
<dbReference type="PIR" id="JS0292">
    <property type="entry name" value="QHECIB"/>
</dbReference>
<dbReference type="PIR" id="JT0373">
    <property type="entry name" value="QHEC4"/>
</dbReference>
<dbReference type="RefSeq" id="YP_008531452.1">
    <property type="nucleotide sequence ID" value="NC_022333.1"/>
</dbReference>
<dbReference type="PDB" id="7CSS">
    <property type="method" value="NMR"/>
    <property type="chains" value="A=59-71"/>
</dbReference>
<dbReference type="PDB" id="7D37">
    <property type="method" value="NMR"/>
    <property type="chains" value="A=59-71"/>
</dbReference>
<dbReference type="PDBsum" id="7CSS"/>
<dbReference type="PDBsum" id="7D37"/>
<dbReference type="SMR" id="P07965"/>
<dbReference type="GO" id="GO:0005615">
    <property type="term" value="C:extracellular space"/>
    <property type="evidence" value="ECO:0007669"/>
    <property type="project" value="InterPro"/>
</dbReference>
<dbReference type="GO" id="GO:0090729">
    <property type="term" value="F:toxin activity"/>
    <property type="evidence" value="ECO:0007669"/>
    <property type="project" value="UniProtKB-KW"/>
</dbReference>
<dbReference type="InterPro" id="IPR019806">
    <property type="entry name" value="Heat-stable_enterotox_CS"/>
</dbReference>
<dbReference type="InterPro" id="IPR001489">
    <property type="entry name" value="Heat-stable_enterotox_STa"/>
</dbReference>
<dbReference type="Pfam" id="PF02048">
    <property type="entry name" value="Enterotoxin_ST"/>
    <property type="match status" value="1"/>
</dbReference>
<dbReference type="PROSITE" id="PS00273">
    <property type="entry name" value="ENTEROTOXIN_H_STABLE"/>
    <property type="match status" value="1"/>
</dbReference>